<accession>Q8WXK4</accession>
<accession>J3KP57</accession>
<accession>Q2M3D5</accession>
<accession>Q52LK4</accession>
<accession>Q6ISF9</accession>
<accession>Q8N8F5</accession>
<name>ASB12_HUMAN</name>
<feature type="chain" id="PRO_0000066947" description="Ankyrin repeat and SOCS box protein 12">
    <location>
        <begin position="1"/>
        <end position="309"/>
    </location>
</feature>
<feature type="repeat" description="ANK 1">
    <location>
        <begin position="63"/>
        <end position="92"/>
    </location>
</feature>
<feature type="repeat" description="ANK 2">
    <location>
        <begin position="96"/>
        <end position="125"/>
    </location>
</feature>
<feature type="repeat" description="ANK 3">
    <location>
        <begin position="129"/>
        <end position="158"/>
    </location>
</feature>
<feature type="repeat" description="ANK 4">
    <location>
        <begin position="171"/>
        <end position="200"/>
    </location>
</feature>
<feature type="repeat" description="ANK 5">
    <location>
        <begin position="213"/>
        <end position="243"/>
    </location>
</feature>
<feature type="domain" description="SOCS box">
    <location>
        <begin position="268"/>
        <end position="308"/>
    </location>
</feature>
<feature type="splice variant" id="VSP_044865" description="In isoform 2." evidence="3">
    <original>M</original>
    <variation>MRIVLQLAKM</variation>
    <location>
        <position position="1"/>
    </location>
</feature>
<feature type="sequence conflict" description="In Ref. 2; BAC04888." evidence="4" ref="2">
    <original>L</original>
    <variation>P</variation>
    <location>
        <position position="149"/>
    </location>
</feature>
<protein>
    <recommendedName>
        <fullName>Ankyrin repeat and SOCS box protein 12</fullName>
        <shortName>ASB-12</shortName>
    </recommendedName>
</protein>
<evidence type="ECO:0000250" key="1"/>
<evidence type="ECO:0000269" key="2">
    <source>
    </source>
</evidence>
<evidence type="ECO:0000303" key="3">
    <source>
    </source>
</evidence>
<evidence type="ECO:0000305" key="4"/>
<dbReference type="EMBL" id="AF403030">
    <property type="protein sequence ID" value="AAL57349.1"/>
    <property type="molecule type" value="mRNA"/>
</dbReference>
<dbReference type="EMBL" id="AK096896">
    <property type="protein sequence ID" value="BAC04888.1"/>
    <property type="molecule type" value="mRNA"/>
</dbReference>
<dbReference type="EMBL" id="AL356317">
    <property type="status" value="NOT_ANNOTATED_CDS"/>
    <property type="molecule type" value="Genomic_DNA"/>
</dbReference>
<dbReference type="EMBL" id="CH471132">
    <property type="protein sequence ID" value="EAX05414.1"/>
    <property type="molecule type" value="Genomic_DNA"/>
</dbReference>
<dbReference type="EMBL" id="BC069436">
    <property type="protein sequence ID" value="AAH69436.1"/>
    <property type="molecule type" value="mRNA"/>
</dbReference>
<dbReference type="EMBL" id="BC069555">
    <property type="protein sequence ID" value="AAH69555.1"/>
    <property type="molecule type" value="mRNA"/>
</dbReference>
<dbReference type="EMBL" id="BC093883">
    <property type="protein sequence ID" value="AAH93883.1"/>
    <property type="molecule type" value="mRNA"/>
</dbReference>
<dbReference type="EMBL" id="BC104946">
    <property type="protein sequence ID" value="AAI04947.1"/>
    <property type="molecule type" value="mRNA"/>
</dbReference>
<dbReference type="CCDS" id="CCDS14378.2">
    <molecule id="Q8WXK4-2"/>
</dbReference>
<dbReference type="RefSeq" id="NP_569059.3">
    <molecule id="Q8WXK4-2"/>
    <property type="nucleotide sequence ID" value="NM_130388.3"/>
</dbReference>
<dbReference type="SMR" id="Q8WXK4"/>
<dbReference type="BioGRID" id="126776">
    <property type="interactions" value="37"/>
</dbReference>
<dbReference type="CORUM" id="Q8WXK4"/>
<dbReference type="FunCoup" id="Q8WXK4">
    <property type="interactions" value="10"/>
</dbReference>
<dbReference type="IntAct" id="Q8WXK4">
    <property type="interactions" value="11"/>
</dbReference>
<dbReference type="MINT" id="Q8WXK4"/>
<dbReference type="STRING" id="9606.ENSP00000355195"/>
<dbReference type="iPTMnet" id="Q8WXK4"/>
<dbReference type="PhosphoSitePlus" id="Q8WXK4"/>
<dbReference type="BioMuta" id="ASB12"/>
<dbReference type="DMDM" id="62512181"/>
<dbReference type="PaxDb" id="9606-ENSP00000355195"/>
<dbReference type="PeptideAtlas" id="Q8WXK4"/>
<dbReference type="ProteomicsDB" id="75075">
    <molecule id="Q8WXK4-1"/>
</dbReference>
<dbReference type="Antibodypedia" id="27045">
    <property type="antibodies" value="56 antibodies from 13 providers"/>
</dbReference>
<dbReference type="DNASU" id="142689"/>
<dbReference type="Ensembl" id="ENST00000362002.3">
    <molecule id="Q8WXK4-2"/>
    <property type="protein sequence ID" value="ENSP00000355195.2"/>
    <property type="gene ID" value="ENSG00000198881.10"/>
</dbReference>
<dbReference type="GeneID" id="142689"/>
<dbReference type="KEGG" id="hsa:142689"/>
<dbReference type="MANE-Select" id="ENST00000362002.3">
    <molecule id="Q8WXK4-2"/>
    <property type="protein sequence ID" value="ENSP00000355195.2"/>
    <property type="RefSeq nucleotide sequence ID" value="NM_130388.4"/>
    <property type="RefSeq protein sequence ID" value="NP_569059.3"/>
</dbReference>
<dbReference type="UCSC" id="uc004dvr.3">
    <molecule id="Q8WXK4-1"/>
    <property type="organism name" value="human"/>
</dbReference>
<dbReference type="AGR" id="HGNC:19763"/>
<dbReference type="CTD" id="142689"/>
<dbReference type="DisGeNET" id="142689"/>
<dbReference type="GeneCards" id="ASB12"/>
<dbReference type="HGNC" id="HGNC:19763">
    <property type="gene designation" value="ASB12"/>
</dbReference>
<dbReference type="HPA" id="ENSG00000198881">
    <property type="expression patterns" value="Group enriched (skeletal muscle, tongue)"/>
</dbReference>
<dbReference type="MIM" id="300891">
    <property type="type" value="gene"/>
</dbReference>
<dbReference type="neXtProt" id="NX_Q8WXK4"/>
<dbReference type="OpenTargets" id="ENSG00000198881"/>
<dbReference type="PharmGKB" id="PA134937084"/>
<dbReference type="VEuPathDB" id="HostDB:ENSG00000198881"/>
<dbReference type="eggNOG" id="KOG0504">
    <property type="taxonomic scope" value="Eukaryota"/>
</dbReference>
<dbReference type="GeneTree" id="ENSGT00940000153902"/>
<dbReference type="HOGENOM" id="CLU_053981_1_0_1"/>
<dbReference type="InParanoid" id="Q8WXK4"/>
<dbReference type="OMA" id="DYNCTDR"/>
<dbReference type="OrthoDB" id="539213at2759"/>
<dbReference type="PAN-GO" id="Q8WXK4">
    <property type="GO annotations" value="2 GO annotations based on evolutionary models"/>
</dbReference>
<dbReference type="PhylomeDB" id="Q8WXK4"/>
<dbReference type="TreeFam" id="TF331945"/>
<dbReference type="PathwayCommons" id="Q8WXK4"/>
<dbReference type="Reactome" id="R-HSA-8951664">
    <property type="pathway name" value="Neddylation"/>
</dbReference>
<dbReference type="Reactome" id="R-HSA-983168">
    <property type="pathway name" value="Antigen processing: Ubiquitination &amp; Proteasome degradation"/>
</dbReference>
<dbReference type="SignaLink" id="Q8WXK4"/>
<dbReference type="UniPathway" id="UPA00143"/>
<dbReference type="BioGRID-ORCS" id="142689">
    <property type="hits" value="13 hits in 810 CRISPR screens"/>
</dbReference>
<dbReference type="GenomeRNAi" id="142689"/>
<dbReference type="Pharos" id="Q8WXK4">
    <property type="development level" value="Tdark"/>
</dbReference>
<dbReference type="PRO" id="PR:Q8WXK4"/>
<dbReference type="Proteomes" id="UP000005640">
    <property type="component" value="Chromosome X"/>
</dbReference>
<dbReference type="RNAct" id="Q8WXK4">
    <property type="molecule type" value="protein"/>
</dbReference>
<dbReference type="Bgee" id="ENSG00000198881">
    <property type="expression patterns" value="Expressed in male germ line stem cell (sensu Vertebrata) in testis and 133 other cell types or tissues"/>
</dbReference>
<dbReference type="GO" id="GO:0005829">
    <property type="term" value="C:cytosol"/>
    <property type="evidence" value="ECO:0000304"/>
    <property type="project" value="Reactome"/>
</dbReference>
<dbReference type="GO" id="GO:0000151">
    <property type="term" value="C:ubiquitin ligase complex"/>
    <property type="evidence" value="ECO:0000314"/>
    <property type="project" value="UniProtKB"/>
</dbReference>
<dbReference type="GO" id="GO:0016567">
    <property type="term" value="P:protein ubiquitination"/>
    <property type="evidence" value="ECO:0000314"/>
    <property type="project" value="UniProtKB"/>
</dbReference>
<dbReference type="FunFam" id="1.25.40.20:FF:000096">
    <property type="entry name" value="Ankyrin repeat and SOCS box containing 12"/>
    <property type="match status" value="1"/>
</dbReference>
<dbReference type="Gene3D" id="1.25.40.20">
    <property type="entry name" value="Ankyrin repeat-containing domain"/>
    <property type="match status" value="1"/>
</dbReference>
<dbReference type="InterPro" id="IPR051573">
    <property type="entry name" value="Ankyrin-SOCS_box_domain"/>
</dbReference>
<dbReference type="InterPro" id="IPR002110">
    <property type="entry name" value="Ankyrin_rpt"/>
</dbReference>
<dbReference type="InterPro" id="IPR036770">
    <property type="entry name" value="Ankyrin_rpt-contain_sf"/>
</dbReference>
<dbReference type="InterPro" id="IPR001496">
    <property type="entry name" value="SOCS_box"/>
</dbReference>
<dbReference type="PANTHER" id="PTHR24136:SF15">
    <property type="entry name" value="ANK_REP_REGION DOMAIN-CONTAINING PROTEIN"/>
    <property type="match status" value="1"/>
</dbReference>
<dbReference type="PANTHER" id="PTHR24136">
    <property type="entry name" value="SOWAH (DROSOPHILA) HOMOLOG"/>
    <property type="match status" value="1"/>
</dbReference>
<dbReference type="Pfam" id="PF12796">
    <property type="entry name" value="Ank_2"/>
    <property type="match status" value="2"/>
</dbReference>
<dbReference type="Pfam" id="PF07525">
    <property type="entry name" value="SOCS_box"/>
    <property type="match status" value="1"/>
</dbReference>
<dbReference type="SMART" id="SM00248">
    <property type="entry name" value="ANK"/>
    <property type="match status" value="5"/>
</dbReference>
<dbReference type="SMART" id="SM00969">
    <property type="entry name" value="SOCS_box"/>
    <property type="match status" value="1"/>
</dbReference>
<dbReference type="SUPFAM" id="SSF48403">
    <property type="entry name" value="Ankyrin repeat"/>
    <property type="match status" value="1"/>
</dbReference>
<dbReference type="PROSITE" id="PS50297">
    <property type="entry name" value="ANK_REP_REGION"/>
    <property type="match status" value="1"/>
</dbReference>
<dbReference type="PROSITE" id="PS50088">
    <property type="entry name" value="ANK_REPEAT"/>
    <property type="match status" value="4"/>
</dbReference>
<proteinExistence type="evidence at protein level"/>
<gene>
    <name type="primary">ASB12</name>
</gene>
<reference key="1">
    <citation type="submission" date="2001-07" db="EMBL/GenBank/DDBJ databases">
        <title>SOCS box proteins.</title>
        <authorList>
            <person name="Kile B.T."/>
            <person name="Nicola N.A."/>
        </authorList>
    </citation>
    <scope>NUCLEOTIDE SEQUENCE [MRNA] OF 1-308 (ISOFORM 1)</scope>
</reference>
<reference key="2">
    <citation type="journal article" date="2004" name="Nat. Genet.">
        <title>Complete sequencing and characterization of 21,243 full-length human cDNAs.</title>
        <authorList>
            <person name="Ota T."/>
            <person name="Suzuki Y."/>
            <person name="Nishikawa T."/>
            <person name="Otsuki T."/>
            <person name="Sugiyama T."/>
            <person name="Irie R."/>
            <person name="Wakamatsu A."/>
            <person name="Hayashi K."/>
            <person name="Sato H."/>
            <person name="Nagai K."/>
            <person name="Kimura K."/>
            <person name="Makita H."/>
            <person name="Sekine M."/>
            <person name="Obayashi M."/>
            <person name="Nishi T."/>
            <person name="Shibahara T."/>
            <person name="Tanaka T."/>
            <person name="Ishii S."/>
            <person name="Yamamoto J."/>
            <person name="Saito K."/>
            <person name="Kawai Y."/>
            <person name="Isono Y."/>
            <person name="Nakamura Y."/>
            <person name="Nagahari K."/>
            <person name="Murakami K."/>
            <person name="Yasuda T."/>
            <person name="Iwayanagi T."/>
            <person name="Wagatsuma M."/>
            <person name="Shiratori A."/>
            <person name="Sudo H."/>
            <person name="Hosoiri T."/>
            <person name="Kaku Y."/>
            <person name="Kodaira H."/>
            <person name="Kondo H."/>
            <person name="Sugawara M."/>
            <person name="Takahashi M."/>
            <person name="Kanda K."/>
            <person name="Yokoi T."/>
            <person name="Furuya T."/>
            <person name="Kikkawa E."/>
            <person name="Omura Y."/>
            <person name="Abe K."/>
            <person name="Kamihara K."/>
            <person name="Katsuta N."/>
            <person name="Sato K."/>
            <person name="Tanikawa M."/>
            <person name="Yamazaki M."/>
            <person name="Ninomiya K."/>
            <person name="Ishibashi T."/>
            <person name="Yamashita H."/>
            <person name="Murakawa K."/>
            <person name="Fujimori K."/>
            <person name="Tanai H."/>
            <person name="Kimata M."/>
            <person name="Watanabe M."/>
            <person name="Hiraoka S."/>
            <person name="Chiba Y."/>
            <person name="Ishida S."/>
            <person name="Ono Y."/>
            <person name="Takiguchi S."/>
            <person name="Watanabe S."/>
            <person name="Yosida M."/>
            <person name="Hotuta T."/>
            <person name="Kusano J."/>
            <person name="Kanehori K."/>
            <person name="Takahashi-Fujii A."/>
            <person name="Hara H."/>
            <person name="Tanase T.-O."/>
            <person name="Nomura Y."/>
            <person name="Togiya S."/>
            <person name="Komai F."/>
            <person name="Hara R."/>
            <person name="Takeuchi K."/>
            <person name="Arita M."/>
            <person name="Imose N."/>
            <person name="Musashino K."/>
            <person name="Yuuki H."/>
            <person name="Oshima A."/>
            <person name="Sasaki N."/>
            <person name="Aotsuka S."/>
            <person name="Yoshikawa Y."/>
            <person name="Matsunawa H."/>
            <person name="Ichihara T."/>
            <person name="Shiohata N."/>
            <person name="Sano S."/>
            <person name="Moriya S."/>
            <person name="Momiyama H."/>
            <person name="Satoh N."/>
            <person name="Takami S."/>
            <person name="Terashima Y."/>
            <person name="Suzuki O."/>
            <person name="Nakagawa S."/>
            <person name="Senoh A."/>
            <person name="Mizoguchi H."/>
            <person name="Goto Y."/>
            <person name="Shimizu F."/>
            <person name="Wakebe H."/>
            <person name="Hishigaki H."/>
            <person name="Watanabe T."/>
            <person name="Sugiyama A."/>
            <person name="Takemoto M."/>
            <person name="Kawakami B."/>
            <person name="Yamazaki M."/>
            <person name="Watanabe K."/>
            <person name="Kumagai A."/>
            <person name="Itakura S."/>
            <person name="Fukuzumi Y."/>
            <person name="Fujimori Y."/>
            <person name="Komiyama M."/>
            <person name="Tashiro H."/>
            <person name="Tanigami A."/>
            <person name="Fujiwara T."/>
            <person name="Ono T."/>
            <person name="Yamada K."/>
            <person name="Fujii Y."/>
            <person name="Ozaki K."/>
            <person name="Hirao M."/>
            <person name="Ohmori Y."/>
            <person name="Kawabata A."/>
            <person name="Hikiji T."/>
            <person name="Kobatake N."/>
            <person name="Inagaki H."/>
            <person name="Ikema Y."/>
            <person name="Okamoto S."/>
            <person name="Okitani R."/>
            <person name="Kawakami T."/>
            <person name="Noguchi S."/>
            <person name="Itoh T."/>
            <person name="Shigeta K."/>
            <person name="Senba T."/>
            <person name="Matsumura K."/>
            <person name="Nakajima Y."/>
            <person name="Mizuno T."/>
            <person name="Morinaga M."/>
            <person name="Sasaki M."/>
            <person name="Togashi T."/>
            <person name="Oyama M."/>
            <person name="Hata H."/>
            <person name="Watanabe M."/>
            <person name="Komatsu T."/>
            <person name="Mizushima-Sugano J."/>
            <person name="Satoh T."/>
            <person name="Shirai Y."/>
            <person name="Takahashi Y."/>
            <person name="Nakagawa K."/>
            <person name="Okumura K."/>
            <person name="Nagase T."/>
            <person name="Nomura N."/>
            <person name="Kikuchi H."/>
            <person name="Masuho Y."/>
            <person name="Yamashita R."/>
            <person name="Nakai K."/>
            <person name="Yada T."/>
            <person name="Nakamura Y."/>
            <person name="Ohara O."/>
            <person name="Isogai T."/>
            <person name="Sugano S."/>
        </authorList>
    </citation>
    <scope>NUCLEOTIDE SEQUENCE [LARGE SCALE MRNA] (ISOFORM 2)</scope>
    <source>
        <tissue>Skeletal muscle</tissue>
    </source>
</reference>
<reference key="3">
    <citation type="journal article" date="2005" name="Nature">
        <title>The DNA sequence of the human X chromosome.</title>
        <authorList>
            <person name="Ross M.T."/>
            <person name="Grafham D.V."/>
            <person name="Coffey A.J."/>
            <person name="Scherer S."/>
            <person name="McLay K."/>
            <person name="Muzny D."/>
            <person name="Platzer M."/>
            <person name="Howell G.R."/>
            <person name="Burrows C."/>
            <person name="Bird C.P."/>
            <person name="Frankish A."/>
            <person name="Lovell F.L."/>
            <person name="Howe K.L."/>
            <person name="Ashurst J.L."/>
            <person name="Fulton R.S."/>
            <person name="Sudbrak R."/>
            <person name="Wen G."/>
            <person name="Jones M.C."/>
            <person name="Hurles M.E."/>
            <person name="Andrews T.D."/>
            <person name="Scott C.E."/>
            <person name="Searle S."/>
            <person name="Ramser J."/>
            <person name="Whittaker A."/>
            <person name="Deadman R."/>
            <person name="Carter N.P."/>
            <person name="Hunt S.E."/>
            <person name="Chen R."/>
            <person name="Cree A."/>
            <person name="Gunaratne P."/>
            <person name="Havlak P."/>
            <person name="Hodgson A."/>
            <person name="Metzker M.L."/>
            <person name="Richards S."/>
            <person name="Scott G."/>
            <person name="Steffen D."/>
            <person name="Sodergren E."/>
            <person name="Wheeler D.A."/>
            <person name="Worley K.C."/>
            <person name="Ainscough R."/>
            <person name="Ambrose K.D."/>
            <person name="Ansari-Lari M.A."/>
            <person name="Aradhya S."/>
            <person name="Ashwell R.I."/>
            <person name="Babbage A.K."/>
            <person name="Bagguley C.L."/>
            <person name="Ballabio A."/>
            <person name="Banerjee R."/>
            <person name="Barker G.E."/>
            <person name="Barlow K.F."/>
            <person name="Barrett I.P."/>
            <person name="Bates K.N."/>
            <person name="Beare D.M."/>
            <person name="Beasley H."/>
            <person name="Beasley O."/>
            <person name="Beck A."/>
            <person name="Bethel G."/>
            <person name="Blechschmidt K."/>
            <person name="Brady N."/>
            <person name="Bray-Allen S."/>
            <person name="Bridgeman A.M."/>
            <person name="Brown A.J."/>
            <person name="Brown M.J."/>
            <person name="Bonnin D."/>
            <person name="Bruford E.A."/>
            <person name="Buhay C."/>
            <person name="Burch P."/>
            <person name="Burford D."/>
            <person name="Burgess J."/>
            <person name="Burrill W."/>
            <person name="Burton J."/>
            <person name="Bye J.M."/>
            <person name="Carder C."/>
            <person name="Carrel L."/>
            <person name="Chako J."/>
            <person name="Chapman J.C."/>
            <person name="Chavez D."/>
            <person name="Chen E."/>
            <person name="Chen G."/>
            <person name="Chen Y."/>
            <person name="Chen Z."/>
            <person name="Chinault C."/>
            <person name="Ciccodicola A."/>
            <person name="Clark S.Y."/>
            <person name="Clarke G."/>
            <person name="Clee C.M."/>
            <person name="Clegg S."/>
            <person name="Clerc-Blankenburg K."/>
            <person name="Clifford K."/>
            <person name="Cobley V."/>
            <person name="Cole C.G."/>
            <person name="Conquer J.S."/>
            <person name="Corby N."/>
            <person name="Connor R.E."/>
            <person name="David R."/>
            <person name="Davies J."/>
            <person name="Davis C."/>
            <person name="Davis J."/>
            <person name="Delgado O."/>
            <person name="Deshazo D."/>
            <person name="Dhami P."/>
            <person name="Ding Y."/>
            <person name="Dinh H."/>
            <person name="Dodsworth S."/>
            <person name="Draper H."/>
            <person name="Dugan-Rocha S."/>
            <person name="Dunham A."/>
            <person name="Dunn M."/>
            <person name="Durbin K.J."/>
            <person name="Dutta I."/>
            <person name="Eades T."/>
            <person name="Ellwood M."/>
            <person name="Emery-Cohen A."/>
            <person name="Errington H."/>
            <person name="Evans K.L."/>
            <person name="Faulkner L."/>
            <person name="Francis F."/>
            <person name="Frankland J."/>
            <person name="Fraser A.E."/>
            <person name="Galgoczy P."/>
            <person name="Gilbert J."/>
            <person name="Gill R."/>
            <person name="Gloeckner G."/>
            <person name="Gregory S.G."/>
            <person name="Gribble S."/>
            <person name="Griffiths C."/>
            <person name="Grocock R."/>
            <person name="Gu Y."/>
            <person name="Gwilliam R."/>
            <person name="Hamilton C."/>
            <person name="Hart E.A."/>
            <person name="Hawes A."/>
            <person name="Heath P.D."/>
            <person name="Heitmann K."/>
            <person name="Hennig S."/>
            <person name="Hernandez J."/>
            <person name="Hinzmann B."/>
            <person name="Ho S."/>
            <person name="Hoffs M."/>
            <person name="Howden P.J."/>
            <person name="Huckle E.J."/>
            <person name="Hume J."/>
            <person name="Hunt P.J."/>
            <person name="Hunt A.R."/>
            <person name="Isherwood J."/>
            <person name="Jacob L."/>
            <person name="Johnson D."/>
            <person name="Jones S."/>
            <person name="de Jong P.J."/>
            <person name="Joseph S.S."/>
            <person name="Keenan S."/>
            <person name="Kelly S."/>
            <person name="Kershaw J.K."/>
            <person name="Khan Z."/>
            <person name="Kioschis P."/>
            <person name="Klages S."/>
            <person name="Knights A.J."/>
            <person name="Kosiura A."/>
            <person name="Kovar-Smith C."/>
            <person name="Laird G.K."/>
            <person name="Langford C."/>
            <person name="Lawlor S."/>
            <person name="Leversha M."/>
            <person name="Lewis L."/>
            <person name="Liu W."/>
            <person name="Lloyd C."/>
            <person name="Lloyd D.M."/>
            <person name="Loulseged H."/>
            <person name="Loveland J.E."/>
            <person name="Lovell J.D."/>
            <person name="Lozado R."/>
            <person name="Lu J."/>
            <person name="Lyne R."/>
            <person name="Ma J."/>
            <person name="Maheshwari M."/>
            <person name="Matthews L.H."/>
            <person name="McDowall J."/>
            <person name="McLaren S."/>
            <person name="McMurray A."/>
            <person name="Meidl P."/>
            <person name="Meitinger T."/>
            <person name="Milne S."/>
            <person name="Miner G."/>
            <person name="Mistry S.L."/>
            <person name="Morgan M."/>
            <person name="Morris S."/>
            <person name="Mueller I."/>
            <person name="Mullikin J.C."/>
            <person name="Nguyen N."/>
            <person name="Nordsiek G."/>
            <person name="Nyakatura G."/>
            <person name="O'dell C.N."/>
            <person name="Okwuonu G."/>
            <person name="Palmer S."/>
            <person name="Pandian R."/>
            <person name="Parker D."/>
            <person name="Parrish J."/>
            <person name="Pasternak S."/>
            <person name="Patel D."/>
            <person name="Pearce A.V."/>
            <person name="Pearson D.M."/>
            <person name="Pelan S.E."/>
            <person name="Perez L."/>
            <person name="Porter K.M."/>
            <person name="Ramsey Y."/>
            <person name="Reichwald K."/>
            <person name="Rhodes S."/>
            <person name="Ridler K.A."/>
            <person name="Schlessinger D."/>
            <person name="Schueler M.G."/>
            <person name="Sehra H.K."/>
            <person name="Shaw-Smith C."/>
            <person name="Shen H."/>
            <person name="Sheridan E.M."/>
            <person name="Shownkeen R."/>
            <person name="Skuce C.D."/>
            <person name="Smith M.L."/>
            <person name="Sotheran E.C."/>
            <person name="Steingruber H.E."/>
            <person name="Steward C.A."/>
            <person name="Storey R."/>
            <person name="Swann R.M."/>
            <person name="Swarbreck D."/>
            <person name="Tabor P.E."/>
            <person name="Taudien S."/>
            <person name="Taylor T."/>
            <person name="Teague B."/>
            <person name="Thomas K."/>
            <person name="Thorpe A."/>
            <person name="Timms K."/>
            <person name="Tracey A."/>
            <person name="Trevanion S."/>
            <person name="Tromans A.C."/>
            <person name="d'Urso M."/>
            <person name="Verduzco D."/>
            <person name="Villasana D."/>
            <person name="Waldron L."/>
            <person name="Wall M."/>
            <person name="Wang Q."/>
            <person name="Warren J."/>
            <person name="Warry G.L."/>
            <person name="Wei X."/>
            <person name="West A."/>
            <person name="Whitehead S.L."/>
            <person name="Whiteley M.N."/>
            <person name="Wilkinson J.E."/>
            <person name="Willey D.L."/>
            <person name="Williams G."/>
            <person name="Williams L."/>
            <person name="Williamson A."/>
            <person name="Williamson H."/>
            <person name="Wilming L."/>
            <person name="Woodmansey R.L."/>
            <person name="Wray P.W."/>
            <person name="Yen J."/>
            <person name="Zhang J."/>
            <person name="Zhou J."/>
            <person name="Zoghbi H."/>
            <person name="Zorilla S."/>
            <person name="Buck D."/>
            <person name="Reinhardt R."/>
            <person name="Poustka A."/>
            <person name="Rosenthal A."/>
            <person name="Lehrach H."/>
            <person name="Meindl A."/>
            <person name="Minx P.J."/>
            <person name="Hillier L.W."/>
            <person name="Willard H.F."/>
            <person name="Wilson R.K."/>
            <person name="Waterston R.H."/>
            <person name="Rice C.M."/>
            <person name="Vaudin M."/>
            <person name="Coulson A."/>
            <person name="Nelson D.L."/>
            <person name="Weinstock G."/>
            <person name="Sulston J.E."/>
            <person name="Durbin R.M."/>
            <person name="Hubbard T."/>
            <person name="Gibbs R.A."/>
            <person name="Beck S."/>
            <person name="Rogers J."/>
            <person name="Bentley D.R."/>
        </authorList>
    </citation>
    <scope>NUCLEOTIDE SEQUENCE [LARGE SCALE GENOMIC DNA]</scope>
</reference>
<reference key="4">
    <citation type="submission" date="2005-09" db="EMBL/GenBank/DDBJ databases">
        <authorList>
            <person name="Mural R.J."/>
            <person name="Istrail S."/>
            <person name="Sutton G."/>
            <person name="Florea L."/>
            <person name="Halpern A.L."/>
            <person name="Mobarry C.M."/>
            <person name="Lippert R."/>
            <person name="Walenz B."/>
            <person name="Shatkay H."/>
            <person name="Dew I."/>
            <person name="Miller J.R."/>
            <person name="Flanigan M.J."/>
            <person name="Edwards N.J."/>
            <person name="Bolanos R."/>
            <person name="Fasulo D."/>
            <person name="Halldorsson B.V."/>
            <person name="Hannenhalli S."/>
            <person name="Turner R."/>
            <person name="Yooseph S."/>
            <person name="Lu F."/>
            <person name="Nusskern D.R."/>
            <person name="Shue B.C."/>
            <person name="Zheng X.H."/>
            <person name="Zhong F."/>
            <person name="Delcher A.L."/>
            <person name="Huson D.H."/>
            <person name="Kravitz S.A."/>
            <person name="Mouchard L."/>
            <person name="Reinert K."/>
            <person name="Remington K.A."/>
            <person name="Clark A.G."/>
            <person name="Waterman M.S."/>
            <person name="Eichler E.E."/>
            <person name="Adams M.D."/>
            <person name="Hunkapiller M.W."/>
            <person name="Myers E.W."/>
            <person name="Venter J.C."/>
        </authorList>
    </citation>
    <scope>NUCLEOTIDE SEQUENCE [LARGE SCALE GENOMIC DNA]</scope>
</reference>
<reference key="5">
    <citation type="journal article" date="2004" name="Genome Res.">
        <title>The status, quality, and expansion of the NIH full-length cDNA project: the Mammalian Gene Collection (MGC).</title>
        <authorList>
            <consortium name="The MGC Project Team"/>
        </authorList>
    </citation>
    <scope>NUCLEOTIDE SEQUENCE [LARGE SCALE MRNA] (ISOFORM 1)</scope>
    <source>
        <tissue>Brain</tissue>
    </source>
</reference>
<reference key="6">
    <citation type="journal article" date="2005" name="FEBS Lett.">
        <title>ASB proteins interact with cullin5 and Rbx2 to form E3 ubiquitin ligase complexes.</title>
        <authorList>
            <person name="Kohroki J."/>
            <person name="Nishiyama T."/>
            <person name="Nakamura T."/>
            <person name="Masuho Y."/>
        </authorList>
    </citation>
    <scope>FUNCTION AS AN E3 UBIQUITIN-PROTEIN LIGASE</scope>
    <scope>INTERACTION WITH CUL5 AND RNF7</scope>
</reference>
<keyword id="KW-0025">Alternative splicing</keyword>
<keyword id="KW-0040">ANK repeat</keyword>
<keyword id="KW-1267">Proteomics identification</keyword>
<keyword id="KW-1185">Reference proteome</keyword>
<keyword id="KW-0677">Repeat</keyword>
<keyword id="KW-0833">Ubl conjugation pathway</keyword>
<sequence length="309" mass="33943">MNLMDITKIFSLLQPDKEEEDTDTEEKQALNQAVYDNDSYTLDQLLRQERYKRFINSRSGWGVPGTPLRLAASYGHLSCLQVLLAHGADVDSLDVKAQTPLFTAVSHGHLDCVRVLLEAGASPGGSIYNNCSPVLTAARDGAVAILQELLDHGAEANVKAKLPVWASNIASCSGPLYLAAVYGHLDCFRLLLLHGADPDYNCTDQGLLARVPRPRTLLEICLHHNCEPEYIQLLIDFGANIYLPSLSLDLTSQDDKGIALLLQARATPRSLLSQVRLVVRRALCQAGQPQAINQLDIPPMLISYLKHQL</sequence>
<organism>
    <name type="scientific">Homo sapiens</name>
    <name type="common">Human</name>
    <dbReference type="NCBI Taxonomy" id="9606"/>
    <lineage>
        <taxon>Eukaryota</taxon>
        <taxon>Metazoa</taxon>
        <taxon>Chordata</taxon>
        <taxon>Craniata</taxon>
        <taxon>Vertebrata</taxon>
        <taxon>Euteleostomi</taxon>
        <taxon>Mammalia</taxon>
        <taxon>Eutheria</taxon>
        <taxon>Euarchontoglires</taxon>
        <taxon>Primates</taxon>
        <taxon>Haplorrhini</taxon>
        <taxon>Catarrhini</taxon>
        <taxon>Hominidae</taxon>
        <taxon>Homo</taxon>
    </lineage>
</organism>
<comment type="function">
    <text evidence="1 2">Probable substrate-recognition component of a SCF-like ECS (Elongin-Cullin-SOCS-box protein) E3 ubiquitin-protein ligase complex which mediates the ubiquitination and subsequent proteasomal degradation of target proteins.</text>
</comment>
<comment type="pathway">
    <text>Protein modification; protein ubiquitination.</text>
</comment>
<comment type="subunit">
    <text evidence="2">Interacts with CUL5 and RNF7.</text>
</comment>
<comment type="interaction">
    <interactant intactId="EBI-18394052">
        <id>Q8WXK4-2</id>
    </interactant>
    <interactant intactId="EBI-10182490">
        <id>O15197-2</id>
        <label>EPHB6</label>
    </interactant>
    <organismsDiffer>false</organismsDiffer>
    <experiments>3</experiments>
</comment>
<comment type="interaction">
    <interactant intactId="EBI-18394052">
        <id>Q8WXK4-2</id>
    </interactant>
    <interactant intactId="EBI-740220">
        <id>O14964</id>
        <label>HGS</label>
    </interactant>
    <organismsDiffer>false</organismsDiffer>
    <experiments>3</experiments>
</comment>
<comment type="interaction">
    <interactant intactId="EBI-18394052">
        <id>Q8WXK4-2</id>
    </interactant>
    <interactant intactId="EBI-3918847">
        <id>Q9H2F3</id>
        <label>HSD3B7</label>
    </interactant>
    <organismsDiffer>false</organismsDiffer>
    <experiments>3</experiments>
</comment>
<comment type="interaction">
    <interactant intactId="EBI-18394052">
        <id>Q8WXK4-2</id>
    </interactant>
    <interactant intactId="EBI-6426443">
        <id>Q2WGJ6</id>
        <label>KLHL38</label>
    </interactant>
    <organismsDiffer>false</organismsDiffer>
    <experiments>3</experiments>
</comment>
<comment type="interaction">
    <interactant intactId="EBI-18394052">
        <id>Q8WXK4-2</id>
    </interactant>
    <interactant intactId="EBI-726510">
        <id>Q96BZ8</id>
        <label>LENG1</label>
    </interactant>
    <organismsDiffer>false</organismsDiffer>
    <experiments>3</experiments>
</comment>
<comment type="interaction">
    <interactant intactId="EBI-18394052">
        <id>Q8WXK4-2</id>
    </interactant>
    <interactant intactId="EBI-3939165">
        <id>O43711</id>
        <label>TLX3</label>
    </interactant>
    <organismsDiffer>false</organismsDiffer>
    <experiments>3</experiments>
</comment>
<comment type="interaction">
    <interactant intactId="EBI-18394052">
        <id>Q8WXK4-2</id>
    </interactant>
    <interactant intactId="EBI-372432">
        <id>Q8WW01</id>
        <label>TSEN15</label>
    </interactant>
    <organismsDiffer>false</organismsDiffer>
    <experiments>3</experiments>
</comment>
<comment type="alternative products">
    <event type="alternative splicing"/>
    <isoform>
        <id>Q8WXK4-1</id>
        <name>1</name>
        <sequence type="displayed"/>
    </isoform>
    <isoform>
        <id>Q8WXK4-2</id>
        <name>2</name>
        <sequence type="described" ref="VSP_044865"/>
    </isoform>
</comment>
<comment type="domain">
    <text evidence="1">The SOCS box domain mediates the interaction with the Elongin BC complex, an adapter module in different E3 ubiquitin-protein ligase complexes.</text>
</comment>
<comment type="similarity">
    <text evidence="4">Belongs to the ankyrin SOCS box (ASB) family.</text>
</comment>